<comment type="function">
    <text evidence="1">Formation of pseudouridine at positions 38, 39 and 40 in the anticodon stem and loop of transfer RNAs.</text>
</comment>
<comment type="catalytic activity">
    <reaction evidence="1">
        <text>uridine(38/39/40) in tRNA = pseudouridine(38/39/40) in tRNA</text>
        <dbReference type="Rhea" id="RHEA:22376"/>
        <dbReference type="Rhea" id="RHEA-COMP:10085"/>
        <dbReference type="Rhea" id="RHEA-COMP:10087"/>
        <dbReference type="ChEBI" id="CHEBI:65314"/>
        <dbReference type="ChEBI" id="CHEBI:65315"/>
        <dbReference type="EC" id="5.4.99.12"/>
    </reaction>
</comment>
<comment type="subunit">
    <text evidence="1">Homodimer.</text>
</comment>
<comment type="similarity">
    <text evidence="1">Belongs to the tRNA pseudouridine synthase TruA family.</text>
</comment>
<evidence type="ECO:0000255" key="1">
    <source>
        <dbReference type="HAMAP-Rule" id="MF_00171"/>
    </source>
</evidence>
<accession>A5ESQ5</accession>
<organism>
    <name type="scientific">Bradyrhizobium sp. (strain BTAi1 / ATCC BAA-1182)</name>
    <dbReference type="NCBI Taxonomy" id="288000"/>
    <lineage>
        <taxon>Bacteria</taxon>
        <taxon>Pseudomonadati</taxon>
        <taxon>Pseudomonadota</taxon>
        <taxon>Alphaproteobacteria</taxon>
        <taxon>Hyphomicrobiales</taxon>
        <taxon>Nitrobacteraceae</taxon>
        <taxon>Bradyrhizobium</taxon>
    </lineage>
</organism>
<sequence>MPRYKLTIEYDGTPFCGWQLQETLPSVQGALEAAVQATCGVPTRVHGSGRTDAGVHATGQVAHCDIAKDFRPDKLRDALNAHLRPNPVAVLEAEIVSDTFEARFSARKRHYRYRIVNRRSNLALEVGRVWRVPQRLDSDAMHAAAQRLIGRHDFTTFRDTECQAKSPEKTLDQLDVVRDGDAVTILTSARSYLHSQVRSMVGSLVWVGQGRWSADDLAAALAARNRAACGVVAPPEGLYLVKVDY</sequence>
<protein>
    <recommendedName>
        <fullName evidence="1">tRNA pseudouridine synthase A</fullName>
        <ecNumber evidence="1">5.4.99.12</ecNumber>
    </recommendedName>
    <alternativeName>
        <fullName evidence="1">tRNA pseudouridine(38-40) synthase</fullName>
    </alternativeName>
    <alternativeName>
        <fullName evidence="1">tRNA pseudouridylate synthase I</fullName>
    </alternativeName>
    <alternativeName>
        <fullName evidence="1">tRNA-uridine isomerase I</fullName>
    </alternativeName>
</protein>
<proteinExistence type="inferred from homology"/>
<gene>
    <name evidence="1" type="primary">truA</name>
    <name type="ordered locus">BBta_7335</name>
</gene>
<keyword id="KW-0413">Isomerase</keyword>
<keyword id="KW-1185">Reference proteome</keyword>
<keyword id="KW-0819">tRNA processing</keyword>
<reference key="1">
    <citation type="journal article" date="2007" name="Science">
        <title>Legumes symbioses: absence of nod genes in photosynthetic bradyrhizobia.</title>
        <authorList>
            <person name="Giraud E."/>
            <person name="Moulin L."/>
            <person name="Vallenet D."/>
            <person name="Barbe V."/>
            <person name="Cytryn E."/>
            <person name="Avarre J.-C."/>
            <person name="Jaubert M."/>
            <person name="Simon D."/>
            <person name="Cartieaux F."/>
            <person name="Prin Y."/>
            <person name="Bena G."/>
            <person name="Hannibal L."/>
            <person name="Fardoux J."/>
            <person name="Kojadinovic M."/>
            <person name="Vuillet L."/>
            <person name="Lajus A."/>
            <person name="Cruveiller S."/>
            <person name="Rouy Z."/>
            <person name="Mangenot S."/>
            <person name="Segurens B."/>
            <person name="Dossat C."/>
            <person name="Franck W.L."/>
            <person name="Chang W.-S."/>
            <person name="Saunders E."/>
            <person name="Bruce D."/>
            <person name="Richardson P."/>
            <person name="Normand P."/>
            <person name="Dreyfus B."/>
            <person name="Pignol D."/>
            <person name="Stacey G."/>
            <person name="Emerich D."/>
            <person name="Vermeglio A."/>
            <person name="Medigue C."/>
            <person name="Sadowsky M."/>
        </authorList>
    </citation>
    <scope>NUCLEOTIDE SEQUENCE [LARGE SCALE GENOMIC DNA]</scope>
    <source>
        <strain>BTAi1 / ATCC BAA-1182</strain>
    </source>
</reference>
<feature type="chain" id="PRO_1000017045" description="tRNA pseudouridine synthase A">
    <location>
        <begin position="1"/>
        <end position="245"/>
    </location>
</feature>
<feature type="active site" description="Nucleophile" evidence="1">
    <location>
        <position position="52"/>
    </location>
</feature>
<feature type="binding site" evidence="1">
    <location>
        <position position="111"/>
    </location>
    <ligand>
        <name>substrate</name>
    </ligand>
</feature>
<name>TRUA_BRASB</name>
<dbReference type="EC" id="5.4.99.12" evidence="1"/>
<dbReference type="EMBL" id="CP000494">
    <property type="protein sequence ID" value="ABQ39199.1"/>
    <property type="molecule type" value="Genomic_DNA"/>
</dbReference>
<dbReference type="RefSeq" id="WP_012047102.1">
    <property type="nucleotide sequence ID" value="NC_009485.1"/>
</dbReference>
<dbReference type="SMR" id="A5ESQ5"/>
<dbReference type="STRING" id="288000.BBta_7335"/>
<dbReference type="KEGG" id="bbt:BBta_7335"/>
<dbReference type="eggNOG" id="COG0101">
    <property type="taxonomic scope" value="Bacteria"/>
</dbReference>
<dbReference type="HOGENOM" id="CLU_014673_0_2_5"/>
<dbReference type="OrthoDB" id="9811823at2"/>
<dbReference type="Proteomes" id="UP000000246">
    <property type="component" value="Chromosome"/>
</dbReference>
<dbReference type="GO" id="GO:0003723">
    <property type="term" value="F:RNA binding"/>
    <property type="evidence" value="ECO:0007669"/>
    <property type="project" value="InterPro"/>
</dbReference>
<dbReference type="GO" id="GO:0160147">
    <property type="term" value="F:tRNA pseudouridine(38-40) synthase activity"/>
    <property type="evidence" value="ECO:0007669"/>
    <property type="project" value="UniProtKB-EC"/>
</dbReference>
<dbReference type="GO" id="GO:0031119">
    <property type="term" value="P:tRNA pseudouridine synthesis"/>
    <property type="evidence" value="ECO:0007669"/>
    <property type="project" value="UniProtKB-UniRule"/>
</dbReference>
<dbReference type="CDD" id="cd02570">
    <property type="entry name" value="PseudoU_synth_EcTruA"/>
    <property type="match status" value="1"/>
</dbReference>
<dbReference type="FunFam" id="3.30.70.580:FF:000001">
    <property type="entry name" value="tRNA pseudouridine synthase A"/>
    <property type="match status" value="1"/>
</dbReference>
<dbReference type="Gene3D" id="3.30.70.660">
    <property type="entry name" value="Pseudouridine synthase I, catalytic domain, C-terminal subdomain"/>
    <property type="match status" value="1"/>
</dbReference>
<dbReference type="Gene3D" id="3.30.70.580">
    <property type="entry name" value="Pseudouridine synthase I, catalytic domain, N-terminal subdomain"/>
    <property type="match status" value="1"/>
</dbReference>
<dbReference type="HAMAP" id="MF_00171">
    <property type="entry name" value="TruA"/>
    <property type="match status" value="1"/>
</dbReference>
<dbReference type="InterPro" id="IPR020103">
    <property type="entry name" value="PsdUridine_synth_cat_dom_sf"/>
</dbReference>
<dbReference type="InterPro" id="IPR001406">
    <property type="entry name" value="PsdUridine_synth_TruA"/>
</dbReference>
<dbReference type="InterPro" id="IPR020097">
    <property type="entry name" value="PsdUridine_synth_TruA_a/b_dom"/>
</dbReference>
<dbReference type="InterPro" id="IPR020095">
    <property type="entry name" value="PsdUridine_synth_TruA_C"/>
</dbReference>
<dbReference type="InterPro" id="IPR020094">
    <property type="entry name" value="TruA/RsuA/RluB/E/F_N"/>
</dbReference>
<dbReference type="NCBIfam" id="TIGR00071">
    <property type="entry name" value="hisT_truA"/>
    <property type="match status" value="1"/>
</dbReference>
<dbReference type="PANTHER" id="PTHR11142">
    <property type="entry name" value="PSEUDOURIDYLATE SYNTHASE"/>
    <property type="match status" value="1"/>
</dbReference>
<dbReference type="PANTHER" id="PTHR11142:SF0">
    <property type="entry name" value="TRNA PSEUDOURIDINE SYNTHASE-LIKE 1"/>
    <property type="match status" value="1"/>
</dbReference>
<dbReference type="Pfam" id="PF01416">
    <property type="entry name" value="PseudoU_synth_1"/>
    <property type="match status" value="2"/>
</dbReference>
<dbReference type="PIRSF" id="PIRSF001430">
    <property type="entry name" value="tRNA_psdUrid_synth"/>
    <property type="match status" value="1"/>
</dbReference>
<dbReference type="SUPFAM" id="SSF55120">
    <property type="entry name" value="Pseudouridine synthase"/>
    <property type="match status" value="1"/>
</dbReference>